<organism>
    <name type="scientific">Pyropia yezoensis</name>
    <name type="common">Susabi-nori</name>
    <name type="synonym">Porphyra yezoensis</name>
    <dbReference type="NCBI Taxonomy" id="2788"/>
    <lineage>
        <taxon>Eukaryota</taxon>
        <taxon>Rhodophyta</taxon>
        <taxon>Bangiophyceae</taxon>
        <taxon>Bangiales</taxon>
        <taxon>Bangiaceae</taxon>
        <taxon>Pyropia</taxon>
    </lineage>
</organism>
<feature type="chain" id="PRO_0000277321" description="Small ribosomal subunit protein bS1c">
    <location>
        <begin position="1"/>
        <end position="263"/>
    </location>
</feature>
<feature type="domain" description="S1 motif 1" evidence="1">
    <location>
        <begin position="27"/>
        <end position="96"/>
    </location>
</feature>
<feature type="domain" description="S1 motif 2" evidence="1">
    <location>
        <begin position="114"/>
        <end position="178"/>
    </location>
</feature>
<feature type="domain" description="S1 motif 3" evidence="1">
    <location>
        <begin position="192"/>
        <end position="260"/>
    </location>
</feature>
<dbReference type="EMBL" id="AP006715">
    <property type="protein sequence ID" value="BAE92469.1"/>
    <property type="status" value="ALT_FRAME"/>
    <property type="molecule type" value="Genomic_DNA"/>
</dbReference>
<dbReference type="RefSeq" id="YP_537026.1">
    <property type="nucleotide sequence ID" value="NC_007932.1"/>
</dbReference>
<dbReference type="SMR" id="Q1XDE2"/>
<dbReference type="GeneID" id="3978932"/>
<dbReference type="GO" id="GO:0009507">
    <property type="term" value="C:chloroplast"/>
    <property type="evidence" value="ECO:0007669"/>
    <property type="project" value="UniProtKB-SubCell"/>
</dbReference>
<dbReference type="GO" id="GO:1990904">
    <property type="term" value="C:ribonucleoprotein complex"/>
    <property type="evidence" value="ECO:0007669"/>
    <property type="project" value="UniProtKB-KW"/>
</dbReference>
<dbReference type="GO" id="GO:0005840">
    <property type="term" value="C:ribosome"/>
    <property type="evidence" value="ECO:0007669"/>
    <property type="project" value="UniProtKB-KW"/>
</dbReference>
<dbReference type="GO" id="GO:0003729">
    <property type="term" value="F:mRNA binding"/>
    <property type="evidence" value="ECO:0007669"/>
    <property type="project" value="TreeGrafter"/>
</dbReference>
<dbReference type="GO" id="GO:0003735">
    <property type="term" value="F:structural constituent of ribosome"/>
    <property type="evidence" value="ECO:0007669"/>
    <property type="project" value="TreeGrafter"/>
</dbReference>
<dbReference type="GO" id="GO:0006412">
    <property type="term" value="P:translation"/>
    <property type="evidence" value="ECO:0007669"/>
    <property type="project" value="TreeGrafter"/>
</dbReference>
<dbReference type="CDD" id="cd05687">
    <property type="entry name" value="S1_RPS1_repeat_ec1_hs1"/>
    <property type="match status" value="1"/>
</dbReference>
<dbReference type="CDD" id="cd04465">
    <property type="entry name" value="S1_RPS1_repeat_ec2_hs2"/>
    <property type="match status" value="1"/>
</dbReference>
<dbReference type="FunFam" id="2.40.50.140:FF:000103">
    <property type="entry name" value="protein RRP5 homolog"/>
    <property type="match status" value="1"/>
</dbReference>
<dbReference type="Gene3D" id="2.40.50.140">
    <property type="entry name" value="Nucleic acid-binding proteins"/>
    <property type="match status" value="3"/>
</dbReference>
<dbReference type="InterPro" id="IPR012340">
    <property type="entry name" value="NA-bd_OB-fold"/>
</dbReference>
<dbReference type="InterPro" id="IPR050437">
    <property type="entry name" value="Ribos_protein_bS1-like"/>
</dbReference>
<dbReference type="InterPro" id="IPR035104">
    <property type="entry name" value="Ribosomal_protein_S1-like"/>
</dbReference>
<dbReference type="InterPro" id="IPR003029">
    <property type="entry name" value="S1_domain"/>
</dbReference>
<dbReference type="PANTHER" id="PTHR10724">
    <property type="entry name" value="30S RIBOSOMAL PROTEIN S1"/>
    <property type="match status" value="1"/>
</dbReference>
<dbReference type="PANTHER" id="PTHR10724:SF7">
    <property type="entry name" value="SMALL RIBOSOMAL SUBUNIT PROTEIN BS1C"/>
    <property type="match status" value="1"/>
</dbReference>
<dbReference type="Pfam" id="PF00575">
    <property type="entry name" value="S1"/>
    <property type="match status" value="3"/>
</dbReference>
<dbReference type="PRINTS" id="PR00681">
    <property type="entry name" value="RIBOSOMALS1"/>
</dbReference>
<dbReference type="SMART" id="SM00316">
    <property type="entry name" value="S1"/>
    <property type="match status" value="3"/>
</dbReference>
<dbReference type="SUPFAM" id="SSF50249">
    <property type="entry name" value="Nucleic acid-binding proteins"/>
    <property type="match status" value="3"/>
</dbReference>
<dbReference type="PROSITE" id="PS50126">
    <property type="entry name" value="S1"/>
    <property type="match status" value="3"/>
</dbReference>
<reference key="1">
    <citation type="submission" date="2003-11" db="EMBL/GenBank/DDBJ databases">
        <title>Whole genome sequence of Porphyra yezoensis chloroplast.</title>
        <authorList>
            <person name="Kunimoto M."/>
            <person name="Morishima K."/>
            <person name="Yoshikawa M."/>
            <person name="Fukuda S."/>
            <person name="Kobayashi T."/>
            <person name="Kobayashi M."/>
            <person name="Okazaki T."/>
            <person name="Ohara I."/>
            <person name="Nakayama I."/>
        </authorList>
    </citation>
    <scope>NUCLEOTIDE SEQUENCE [LARGE SCALE GENOMIC DNA]</scope>
    <source>
        <strain>U-51</strain>
    </source>
</reference>
<comment type="subcellular location">
    <subcellularLocation>
        <location>Plastid</location>
        <location>Chloroplast</location>
    </subcellularLocation>
</comment>
<comment type="similarity">
    <text evidence="2">Belongs to the bacterial ribosomal protein bS1 family.</text>
</comment>
<comment type="sequence caution" evidence="2">
    <conflict type="frameshift">
        <sequence resource="EMBL-CDS" id="BAE92469"/>
    </conflict>
</comment>
<accession>Q1XDE2</accession>
<proteinExistence type="inferred from homology"/>
<geneLocation type="chloroplast"/>
<sequence>MTKNNEGFTHRNFAAVLQKYKYDLNLGDIVAGTIFSFELNGVLVDIGTPISAYLPIQEVSSNQDLNNFTSLNINDTREFFLLDYNIQSKQLILSIRRLEYIRAWKRIRQLLAEDSLLNVMIKGFNKGGMIINLEGISGFVPNSHLGNFQKSEQFNNKFIKLKLLNVEEKSNNLILSHRRALISQASSNLIVGNIIEGIINQITPYGLFIKVGNLKGLVHISEINIKNLEQISSQFKIGDTIKAVIIHVDKKQGRLSLSMKHLR</sequence>
<gene>
    <name type="primary">rps1</name>
</gene>
<keyword id="KW-0150">Chloroplast</keyword>
<keyword id="KW-0934">Plastid</keyword>
<keyword id="KW-0677">Repeat</keyword>
<keyword id="KW-0687">Ribonucleoprotein</keyword>
<keyword id="KW-0689">Ribosomal protein</keyword>
<evidence type="ECO:0000255" key="1">
    <source>
        <dbReference type="PROSITE-ProRule" id="PRU00180"/>
    </source>
</evidence>
<evidence type="ECO:0000305" key="2"/>
<name>RR1_PYRYE</name>
<protein>
    <recommendedName>
        <fullName evidence="2">Small ribosomal subunit protein bS1c</fullName>
    </recommendedName>
    <alternativeName>
        <fullName>30S ribosomal protein S1, chloroplastic</fullName>
    </alternativeName>
</protein>